<feature type="chain" id="PRO_0000170144" description="Large ribosomal subunit protein bL33">
    <location>
        <begin position="1"/>
        <end position="55"/>
    </location>
</feature>
<protein>
    <recommendedName>
        <fullName evidence="1">Large ribosomal subunit protein bL33</fullName>
    </recommendedName>
    <alternativeName>
        <fullName>50S ribosomal protein L33</fullName>
    </alternativeName>
</protein>
<dbReference type="EMBL" id="BA000003">
    <property type="protein sequence ID" value="BAB12805.1"/>
    <property type="molecule type" value="Genomic_DNA"/>
</dbReference>
<dbReference type="RefSeq" id="NP_239919.1">
    <property type="nucleotide sequence ID" value="NC_002528.1"/>
</dbReference>
<dbReference type="RefSeq" id="WP_010895937.1">
    <property type="nucleotide sequence ID" value="NC_002528.1"/>
</dbReference>
<dbReference type="SMR" id="P57187"/>
<dbReference type="STRING" id="563178.BUAP5A_084"/>
<dbReference type="EnsemblBacteria" id="BAB12805">
    <property type="protein sequence ID" value="BAB12805"/>
    <property type="gene ID" value="BAB12805"/>
</dbReference>
<dbReference type="KEGG" id="buc:BU085"/>
<dbReference type="PATRIC" id="fig|107806.10.peg.91"/>
<dbReference type="eggNOG" id="COG0267">
    <property type="taxonomic scope" value="Bacteria"/>
</dbReference>
<dbReference type="HOGENOM" id="CLU_190949_1_1_6"/>
<dbReference type="Proteomes" id="UP000001806">
    <property type="component" value="Chromosome"/>
</dbReference>
<dbReference type="GO" id="GO:0022625">
    <property type="term" value="C:cytosolic large ribosomal subunit"/>
    <property type="evidence" value="ECO:0007669"/>
    <property type="project" value="TreeGrafter"/>
</dbReference>
<dbReference type="GO" id="GO:0003735">
    <property type="term" value="F:structural constituent of ribosome"/>
    <property type="evidence" value="ECO:0007669"/>
    <property type="project" value="InterPro"/>
</dbReference>
<dbReference type="GO" id="GO:0006412">
    <property type="term" value="P:translation"/>
    <property type="evidence" value="ECO:0007669"/>
    <property type="project" value="UniProtKB-UniRule"/>
</dbReference>
<dbReference type="FunFam" id="2.20.28.120:FF:000001">
    <property type="entry name" value="50S ribosomal protein L33"/>
    <property type="match status" value="1"/>
</dbReference>
<dbReference type="Gene3D" id="2.20.28.120">
    <property type="entry name" value="Ribosomal protein L33"/>
    <property type="match status" value="1"/>
</dbReference>
<dbReference type="HAMAP" id="MF_00294">
    <property type="entry name" value="Ribosomal_bL33"/>
    <property type="match status" value="1"/>
</dbReference>
<dbReference type="InterPro" id="IPR001705">
    <property type="entry name" value="Ribosomal_bL33"/>
</dbReference>
<dbReference type="InterPro" id="IPR038584">
    <property type="entry name" value="Ribosomal_bL33_sf"/>
</dbReference>
<dbReference type="InterPro" id="IPR011332">
    <property type="entry name" value="Ribosomal_zn-bd"/>
</dbReference>
<dbReference type="NCBIfam" id="NF001860">
    <property type="entry name" value="PRK00595.1"/>
    <property type="match status" value="1"/>
</dbReference>
<dbReference type="NCBIfam" id="TIGR01023">
    <property type="entry name" value="rpmG_bact"/>
    <property type="match status" value="1"/>
</dbReference>
<dbReference type="PANTHER" id="PTHR15238">
    <property type="entry name" value="54S RIBOSOMAL PROTEIN L39, MITOCHONDRIAL"/>
    <property type="match status" value="1"/>
</dbReference>
<dbReference type="PANTHER" id="PTHR15238:SF1">
    <property type="entry name" value="LARGE RIBOSOMAL SUBUNIT PROTEIN BL33M"/>
    <property type="match status" value="1"/>
</dbReference>
<dbReference type="Pfam" id="PF00471">
    <property type="entry name" value="Ribosomal_L33"/>
    <property type="match status" value="1"/>
</dbReference>
<dbReference type="SUPFAM" id="SSF57829">
    <property type="entry name" value="Zn-binding ribosomal proteins"/>
    <property type="match status" value="1"/>
</dbReference>
<organism>
    <name type="scientific">Buchnera aphidicola subsp. Acyrthosiphon pisum (strain APS)</name>
    <name type="common">Acyrthosiphon pisum symbiotic bacterium</name>
    <dbReference type="NCBI Taxonomy" id="107806"/>
    <lineage>
        <taxon>Bacteria</taxon>
        <taxon>Pseudomonadati</taxon>
        <taxon>Pseudomonadota</taxon>
        <taxon>Gammaproteobacteria</taxon>
        <taxon>Enterobacterales</taxon>
        <taxon>Erwiniaceae</taxon>
        <taxon>Buchnera</taxon>
    </lineage>
</organism>
<keyword id="KW-1185">Reference proteome</keyword>
<keyword id="KW-0687">Ribonucleoprotein</keyword>
<keyword id="KW-0689">Ribosomal protein</keyword>
<sequence>MAKKSREKIKMISSAGTGHYYTTTKNKRNTPDKLKLKKYDPVIRKHILYNEGKIK</sequence>
<comment type="similarity">
    <text evidence="1">Belongs to the bacterial ribosomal protein bL33 family.</text>
</comment>
<name>RL33_BUCAI</name>
<gene>
    <name type="primary">rpmG</name>
    <name type="ordered locus">BU085</name>
</gene>
<reference key="1">
    <citation type="journal article" date="2000" name="Nature">
        <title>Genome sequence of the endocellular bacterial symbiont of aphids Buchnera sp. APS.</title>
        <authorList>
            <person name="Shigenobu S."/>
            <person name="Watanabe H."/>
            <person name="Hattori M."/>
            <person name="Sakaki Y."/>
            <person name="Ishikawa H."/>
        </authorList>
    </citation>
    <scope>NUCLEOTIDE SEQUENCE [LARGE SCALE GENOMIC DNA]</scope>
    <source>
        <strain>APS</strain>
    </source>
</reference>
<accession>P57187</accession>
<evidence type="ECO:0000305" key="1"/>
<proteinExistence type="inferred from homology"/>